<evidence type="ECO:0000250" key="1"/>
<evidence type="ECO:0000250" key="2">
    <source>
        <dbReference type="UniProtKB" id="O75380"/>
    </source>
</evidence>
<evidence type="ECO:0000250" key="3">
    <source>
        <dbReference type="UniProtKB" id="P52503"/>
    </source>
</evidence>
<evidence type="ECO:0000305" key="4"/>
<gene>
    <name type="primary">NDUFS6</name>
</gene>
<sequence>MAAAMTFCRLLNRCGEAARSLPLGARCFGVRVSPTGEKVTHTGQVYDDKDYRRIRFVGRQKEVNENFAIDLIAEQPVSEVETRVIACDGGGGALGHPKVYINLDKETKTGTCGYCGLQFRQHHR</sequence>
<dbReference type="EMBL" id="DQ885658">
    <property type="protein sequence ID" value="ABH12167.1"/>
    <property type="molecule type" value="mRNA"/>
</dbReference>
<dbReference type="RefSeq" id="NP_001266642.1">
    <property type="nucleotide sequence ID" value="NM_001279713.1"/>
</dbReference>
<dbReference type="SMR" id="Q0MQH6"/>
<dbReference type="FunCoup" id="Q0MQH6">
    <property type="interactions" value="1054"/>
</dbReference>
<dbReference type="STRING" id="9593.ENSGGOP00000031767"/>
<dbReference type="Ensembl" id="ENSGGOT00000017008.3">
    <property type="protein sequence ID" value="ENSGGOP00000016543.2"/>
    <property type="gene ID" value="ENSGGOG00000016951.3"/>
</dbReference>
<dbReference type="GeneID" id="101151434"/>
<dbReference type="KEGG" id="ggo:101151434"/>
<dbReference type="CTD" id="4726"/>
<dbReference type="eggNOG" id="KOG3456">
    <property type="taxonomic scope" value="Eukaryota"/>
</dbReference>
<dbReference type="GeneTree" id="ENSGT00390000015775"/>
<dbReference type="HOGENOM" id="CLU_083053_3_2_1"/>
<dbReference type="InParanoid" id="Q0MQH6"/>
<dbReference type="OMA" id="TACCDGG"/>
<dbReference type="Proteomes" id="UP000001519">
    <property type="component" value="Chromosome 17"/>
</dbReference>
<dbReference type="Bgee" id="ENSGGOG00000016951">
    <property type="expression patterns" value="Expressed in heart and 5 other cell types or tissues"/>
</dbReference>
<dbReference type="GO" id="GO:0005743">
    <property type="term" value="C:mitochondrial inner membrane"/>
    <property type="evidence" value="ECO:0007669"/>
    <property type="project" value="UniProtKB-SubCell"/>
</dbReference>
<dbReference type="GO" id="GO:0045271">
    <property type="term" value="C:respiratory chain complex I"/>
    <property type="evidence" value="ECO:0000250"/>
    <property type="project" value="UniProtKB"/>
</dbReference>
<dbReference type="GO" id="GO:0006120">
    <property type="term" value="P:mitochondrial electron transport, NADH to ubiquinone"/>
    <property type="evidence" value="ECO:0000318"/>
    <property type="project" value="GO_Central"/>
</dbReference>
<dbReference type="FunFam" id="2.60.260.40:FF:000002">
    <property type="entry name" value="NADH dehydrogenase [ubiquinone] iron-sulfur protein 6, mitochondrial"/>
    <property type="match status" value="1"/>
</dbReference>
<dbReference type="Gene3D" id="2.60.260.40">
    <property type="entry name" value="q5lls5 like domains"/>
    <property type="match status" value="1"/>
</dbReference>
<dbReference type="InterPro" id="IPR016668">
    <property type="entry name" value="NDUFS6"/>
</dbReference>
<dbReference type="InterPro" id="IPR019401">
    <property type="entry name" value="Znf_CHCC"/>
</dbReference>
<dbReference type="PANTHER" id="PTHR13156:SF0">
    <property type="entry name" value="NADH DEHYDROGENASE [UBIQUINONE] IRON-SULFUR PROTEIN 6, MITOCHONDRIAL"/>
    <property type="match status" value="1"/>
</dbReference>
<dbReference type="PANTHER" id="PTHR13156">
    <property type="entry name" value="NADH-UBIQUINONE OXIDOREDUCTASE 13 KD-A SUBUNIT"/>
    <property type="match status" value="1"/>
</dbReference>
<dbReference type="Pfam" id="PF10276">
    <property type="entry name" value="zf-CHCC"/>
    <property type="match status" value="1"/>
</dbReference>
<dbReference type="PIRSF" id="PIRSF016564">
    <property type="entry name" value="CI-13KD-A"/>
    <property type="match status" value="1"/>
</dbReference>
<reference key="1">
    <citation type="journal article" date="2006" name="Gene">
        <title>Adaptive selection of mitochondrial complex I subunits during primate radiation.</title>
        <authorList>
            <person name="Mishmar D."/>
            <person name="Ruiz-Pesini E."/>
            <person name="Mondragon-Palomino M."/>
            <person name="Procaccio V."/>
            <person name="Gaut B."/>
            <person name="Wallace D.C."/>
        </authorList>
    </citation>
    <scope>NUCLEOTIDE SEQUENCE [MRNA]</scope>
</reference>
<name>NDUS6_GORGO</name>
<organism>
    <name type="scientific">Gorilla gorilla gorilla</name>
    <name type="common">Western lowland gorilla</name>
    <dbReference type="NCBI Taxonomy" id="9595"/>
    <lineage>
        <taxon>Eukaryota</taxon>
        <taxon>Metazoa</taxon>
        <taxon>Chordata</taxon>
        <taxon>Craniata</taxon>
        <taxon>Vertebrata</taxon>
        <taxon>Euteleostomi</taxon>
        <taxon>Mammalia</taxon>
        <taxon>Eutheria</taxon>
        <taxon>Euarchontoglires</taxon>
        <taxon>Primates</taxon>
        <taxon>Haplorrhini</taxon>
        <taxon>Catarrhini</taxon>
        <taxon>Hominidae</taxon>
        <taxon>Gorilla</taxon>
    </lineage>
</organism>
<accession>Q0MQH6</accession>
<proteinExistence type="evidence at transcript level"/>
<comment type="function">
    <text evidence="2">Accessory subunit of the mitochondrial membrane respiratory chain NADH dehydrogenase (Complex I), that is believed not to be involved in catalysis. Complex I functions in the transfer of electrons from NADH to the respiratory chain. The immediate electron acceptor for the enzyme is believed to be ubiquinone.</text>
</comment>
<comment type="subunit">
    <text evidence="2">Mammalian complex I is composed of 45 different subunits. This is a component of the iron-sulfur (IP) fragment of the enzyme.</text>
</comment>
<comment type="subcellular location">
    <subcellularLocation>
        <location evidence="2">Mitochondrion inner membrane</location>
        <topology evidence="2">Peripheral membrane protein</topology>
        <orientation evidence="2">Matrix side</orientation>
    </subcellularLocation>
</comment>
<comment type="similarity">
    <text evidence="4">Belongs to the complex I NDUFS6 subunit family.</text>
</comment>
<feature type="transit peptide" description="Mitochondrion" evidence="1">
    <location>
        <begin position="1"/>
        <end position="28"/>
    </location>
</feature>
<feature type="chain" id="PRO_0000251868" description="NADH dehydrogenase [ubiquinone] iron-sulfur protein 6, mitochondrial">
    <location>
        <begin position="29"/>
        <end position="124"/>
    </location>
</feature>
<feature type="modified residue" description="N6-acetyllysine" evidence="3">
    <location>
        <position position="98"/>
    </location>
</feature>
<keyword id="KW-0007">Acetylation</keyword>
<keyword id="KW-0249">Electron transport</keyword>
<keyword id="KW-0472">Membrane</keyword>
<keyword id="KW-0496">Mitochondrion</keyword>
<keyword id="KW-0999">Mitochondrion inner membrane</keyword>
<keyword id="KW-1185">Reference proteome</keyword>
<keyword id="KW-0679">Respiratory chain</keyword>
<keyword id="KW-0809">Transit peptide</keyword>
<keyword id="KW-0813">Transport</keyword>
<protein>
    <recommendedName>
        <fullName>NADH dehydrogenase [ubiquinone] iron-sulfur protein 6, mitochondrial</fullName>
    </recommendedName>
    <alternativeName>
        <fullName>Complex I-13kD-A</fullName>
        <shortName>CI-13kD-A</shortName>
    </alternativeName>
    <alternativeName>
        <fullName>NADH-ubiquinone oxidoreductase 13 kDa-A subunit</fullName>
    </alternativeName>
</protein>